<gene>
    <name evidence="1" type="primary">rpsO</name>
    <name type="ordered locus">cbdbA931</name>
</gene>
<feature type="chain" id="PRO_0000115428" description="Small ribosomal subunit protein uS15">
    <location>
        <begin position="1"/>
        <end position="87"/>
    </location>
</feature>
<organism>
    <name type="scientific">Dehalococcoides mccartyi (strain CBDB1)</name>
    <dbReference type="NCBI Taxonomy" id="255470"/>
    <lineage>
        <taxon>Bacteria</taxon>
        <taxon>Bacillati</taxon>
        <taxon>Chloroflexota</taxon>
        <taxon>Dehalococcoidia</taxon>
        <taxon>Dehalococcoidales</taxon>
        <taxon>Dehalococcoidaceae</taxon>
        <taxon>Dehalococcoides</taxon>
    </lineage>
</organism>
<comment type="function">
    <text evidence="1">One of the primary rRNA binding proteins, it binds directly to 16S rRNA where it helps nucleate assembly of the platform of the 30S subunit by binding and bridging several RNA helices of the 16S rRNA.</text>
</comment>
<comment type="function">
    <text evidence="1">Forms an intersubunit bridge (bridge B4) with the 23S rRNA of the 50S subunit in the ribosome.</text>
</comment>
<comment type="subunit">
    <text evidence="1">Part of the 30S ribosomal subunit. Forms a bridge to the 50S subunit in the 70S ribosome, contacting the 23S rRNA.</text>
</comment>
<comment type="similarity">
    <text evidence="1">Belongs to the universal ribosomal protein uS15 family.</text>
</comment>
<evidence type="ECO:0000255" key="1">
    <source>
        <dbReference type="HAMAP-Rule" id="MF_01343"/>
    </source>
</evidence>
<evidence type="ECO:0000305" key="2"/>
<sequence>MDKQEKSLIINEFKKSESDTGSTEVQVALLTARIHQLTTHMIANKHDFHTKRSLLTLVGRRRRLLSYMRNSNGAGYQELIANLGLRK</sequence>
<dbReference type="EMBL" id="AJ965256">
    <property type="protein sequence ID" value="CAI83059.1"/>
    <property type="molecule type" value="Genomic_DNA"/>
</dbReference>
<dbReference type="RefSeq" id="WP_011309410.1">
    <property type="nucleotide sequence ID" value="NC_007356.1"/>
</dbReference>
<dbReference type="SMR" id="Q3ZXV7"/>
<dbReference type="KEGG" id="deh:cbdbA931"/>
<dbReference type="HOGENOM" id="CLU_148518_0_1_0"/>
<dbReference type="Proteomes" id="UP000000433">
    <property type="component" value="Chromosome"/>
</dbReference>
<dbReference type="GO" id="GO:0022627">
    <property type="term" value="C:cytosolic small ribosomal subunit"/>
    <property type="evidence" value="ECO:0007669"/>
    <property type="project" value="TreeGrafter"/>
</dbReference>
<dbReference type="GO" id="GO:0019843">
    <property type="term" value="F:rRNA binding"/>
    <property type="evidence" value="ECO:0007669"/>
    <property type="project" value="UniProtKB-UniRule"/>
</dbReference>
<dbReference type="GO" id="GO:0003735">
    <property type="term" value="F:structural constituent of ribosome"/>
    <property type="evidence" value="ECO:0007669"/>
    <property type="project" value="InterPro"/>
</dbReference>
<dbReference type="GO" id="GO:0006412">
    <property type="term" value="P:translation"/>
    <property type="evidence" value="ECO:0007669"/>
    <property type="project" value="UniProtKB-UniRule"/>
</dbReference>
<dbReference type="CDD" id="cd00353">
    <property type="entry name" value="Ribosomal_S15p_S13e"/>
    <property type="match status" value="1"/>
</dbReference>
<dbReference type="FunFam" id="1.10.287.10:FF:000002">
    <property type="entry name" value="30S ribosomal protein S15"/>
    <property type="match status" value="1"/>
</dbReference>
<dbReference type="Gene3D" id="6.10.250.3130">
    <property type="match status" value="1"/>
</dbReference>
<dbReference type="Gene3D" id="1.10.287.10">
    <property type="entry name" value="S15/NS1, RNA-binding"/>
    <property type="match status" value="1"/>
</dbReference>
<dbReference type="HAMAP" id="MF_01343_B">
    <property type="entry name" value="Ribosomal_uS15_B"/>
    <property type="match status" value="1"/>
</dbReference>
<dbReference type="InterPro" id="IPR000589">
    <property type="entry name" value="Ribosomal_uS15"/>
</dbReference>
<dbReference type="InterPro" id="IPR005290">
    <property type="entry name" value="Ribosomal_uS15_bac-type"/>
</dbReference>
<dbReference type="InterPro" id="IPR009068">
    <property type="entry name" value="uS15_NS1_RNA-bd_sf"/>
</dbReference>
<dbReference type="NCBIfam" id="TIGR00952">
    <property type="entry name" value="S15_bact"/>
    <property type="match status" value="1"/>
</dbReference>
<dbReference type="PANTHER" id="PTHR23321">
    <property type="entry name" value="RIBOSOMAL PROTEIN S15, BACTERIAL AND ORGANELLAR"/>
    <property type="match status" value="1"/>
</dbReference>
<dbReference type="PANTHER" id="PTHR23321:SF26">
    <property type="entry name" value="SMALL RIBOSOMAL SUBUNIT PROTEIN US15M"/>
    <property type="match status" value="1"/>
</dbReference>
<dbReference type="Pfam" id="PF00312">
    <property type="entry name" value="Ribosomal_S15"/>
    <property type="match status" value="1"/>
</dbReference>
<dbReference type="SMART" id="SM01387">
    <property type="entry name" value="Ribosomal_S15"/>
    <property type="match status" value="1"/>
</dbReference>
<dbReference type="SUPFAM" id="SSF47060">
    <property type="entry name" value="S15/NS1 RNA-binding domain"/>
    <property type="match status" value="1"/>
</dbReference>
<dbReference type="PROSITE" id="PS00362">
    <property type="entry name" value="RIBOSOMAL_S15"/>
    <property type="match status" value="1"/>
</dbReference>
<proteinExistence type="inferred from homology"/>
<accession>Q3ZXV7</accession>
<protein>
    <recommendedName>
        <fullName evidence="1">Small ribosomal subunit protein uS15</fullName>
    </recommendedName>
    <alternativeName>
        <fullName evidence="2">30S ribosomal protein S15</fullName>
    </alternativeName>
</protein>
<name>RS15_DEHMC</name>
<keyword id="KW-0687">Ribonucleoprotein</keyword>
<keyword id="KW-0689">Ribosomal protein</keyword>
<keyword id="KW-0694">RNA-binding</keyword>
<keyword id="KW-0699">rRNA-binding</keyword>
<reference key="1">
    <citation type="journal article" date="2005" name="Nat. Biotechnol.">
        <title>Genome sequence of the chlorinated compound-respiring bacterium Dehalococcoides species strain CBDB1.</title>
        <authorList>
            <person name="Kube M."/>
            <person name="Beck A."/>
            <person name="Zinder S.H."/>
            <person name="Kuhl H."/>
            <person name="Reinhardt R."/>
            <person name="Adrian L."/>
        </authorList>
    </citation>
    <scope>NUCLEOTIDE SEQUENCE [LARGE SCALE GENOMIC DNA]</scope>
    <source>
        <strain>CBDB1</strain>
    </source>
</reference>